<gene>
    <name evidence="1" type="primary">kmo</name>
    <name type="ordered locus">XOO2306</name>
</gene>
<dbReference type="EC" id="1.14.13.9" evidence="1"/>
<dbReference type="EMBL" id="AP008229">
    <property type="protein sequence ID" value="BAE69061.1"/>
    <property type="molecule type" value="Genomic_DNA"/>
</dbReference>
<dbReference type="RefSeq" id="WP_011408607.1">
    <property type="nucleotide sequence ID" value="NC_007705.1"/>
</dbReference>
<dbReference type="SMR" id="Q2P316"/>
<dbReference type="KEGG" id="xom:XOO2306"/>
<dbReference type="HOGENOM" id="CLU_023210_0_1_6"/>
<dbReference type="UniPathway" id="UPA00253">
    <property type="reaction ID" value="UER00328"/>
</dbReference>
<dbReference type="GO" id="GO:0071949">
    <property type="term" value="F:FAD binding"/>
    <property type="evidence" value="ECO:0007669"/>
    <property type="project" value="InterPro"/>
</dbReference>
<dbReference type="GO" id="GO:0004502">
    <property type="term" value="F:kynurenine 3-monooxygenase activity"/>
    <property type="evidence" value="ECO:0007669"/>
    <property type="project" value="UniProtKB-UniRule"/>
</dbReference>
<dbReference type="GO" id="GO:0043420">
    <property type="term" value="P:anthranilate metabolic process"/>
    <property type="evidence" value="ECO:0007669"/>
    <property type="project" value="UniProtKB-UniRule"/>
</dbReference>
<dbReference type="GO" id="GO:0070189">
    <property type="term" value="P:kynurenine metabolic process"/>
    <property type="evidence" value="ECO:0007669"/>
    <property type="project" value="TreeGrafter"/>
</dbReference>
<dbReference type="GO" id="GO:0006569">
    <property type="term" value="P:L-tryptophan catabolic process"/>
    <property type="evidence" value="ECO:0007669"/>
    <property type="project" value="UniProtKB-UniRule"/>
</dbReference>
<dbReference type="GO" id="GO:0009435">
    <property type="term" value="P:NAD biosynthetic process"/>
    <property type="evidence" value="ECO:0007669"/>
    <property type="project" value="UniProtKB-UniPathway"/>
</dbReference>
<dbReference type="GO" id="GO:0019805">
    <property type="term" value="P:quinolinate biosynthetic process"/>
    <property type="evidence" value="ECO:0007669"/>
    <property type="project" value="UniProtKB-UniRule"/>
</dbReference>
<dbReference type="FunFam" id="3.50.50.60:FF:000185">
    <property type="entry name" value="Kynurenine 3-monooxygenase"/>
    <property type="match status" value="1"/>
</dbReference>
<dbReference type="Gene3D" id="3.50.50.60">
    <property type="entry name" value="FAD/NAD(P)-binding domain"/>
    <property type="match status" value="1"/>
</dbReference>
<dbReference type="HAMAP" id="MF_01971">
    <property type="entry name" value="Kynurenine_monooxygenase"/>
    <property type="match status" value="1"/>
</dbReference>
<dbReference type="InterPro" id="IPR002938">
    <property type="entry name" value="FAD-bd"/>
</dbReference>
<dbReference type="InterPro" id="IPR036188">
    <property type="entry name" value="FAD/NAD-bd_sf"/>
</dbReference>
<dbReference type="InterPro" id="IPR027545">
    <property type="entry name" value="Kynurenine_monooxygenase"/>
</dbReference>
<dbReference type="PANTHER" id="PTHR46028">
    <property type="entry name" value="KYNURENINE 3-MONOOXYGENASE"/>
    <property type="match status" value="1"/>
</dbReference>
<dbReference type="PANTHER" id="PTHR46028:SF2">
    <property type="entry name" value="KYNURENINE 3-MONOOXYGENASE"/>
    <property type="match status" value="1"/>
</dbReference>
<dbReference type="Pfam" id="PF01494">
    <property type="entry name" value="FAD_binding_3"/>
    <property type="match status" value="1"/>
</dbReference>
<dbReference type="PRINTS" id="PR00420">
    <property type="entry name" value="RNGMNOXGNASE"/>
</dbReference>
<dbReference type="SUPFAM" id="SSF51905">
    <property type="entry name" value="FAD/NAD(P)-binding domain"/>
    <property type="match status" value="1"/>
</dbReference>
<protein>
    <recommendedName>
        <fullName evidence="1">Kynurenine 3-monooxygenase</fullName>
        <ecNumber evidence="1">1.14.13.9</ecNumber>
    </recommendedName>
    <alternativeName>
        <fullName evidence="1">Kynurenine 3-hydroxylase</fullName>
    </alternativeName>
</protein>
<evidence type="ECO:0000255" key="1">
    <source>
        <dbReference type="HAMAP-Rule" id="MF_01971"/>
    </source>
</evidence>
<name>KMO_XANOM</name>
<reference key="1">
    <citation type="journal article" date="2005" name="Jpn. Agric. Res. Q.">
        <title>Genome sequence of Xanthomonas oryzae pv. oryzae suggests contribution of large numbers of effector genes and insertion sequences to its race diversity.</title>
        <authorList>
            <person name="Ochiai H."/>
            <person name="Inoue Y."/>
            <person name="Takeya M."/>
            <person name="Sasaki A."/>
            <person name="Kaku H."/>
        </authorList>
    </citation>
    <scope>NUCLEOTIDE SEQUENCE [LARGE SCALE GENOMIC DNA]</scope>
    <source>
        <strain>MAFF 311018</strain>
    </source>
</reference>
<comment type="function">
    <text evidence="1">Catalyzes the hydroxylation of L-kynurenine (L-Kyn) to form 3-hydroxy-L-kynurenine (L-3OHKyn). Required for synthesis of quinolinic acid.</text>
</comment>
<comment type="catalytic activity">
    <reaction evidence="1">
        <text>L-kynurenine + NADPH + O2 + H(+) = 3-hydroxy-L-kynurenine + NADP(+) + H2O</text>
        <dbReference type="Rhea" id="RHEA:20545"/>
        <dbReference type="ChEBI" id="CHEBI:15377"/>
        <dbReference type="ChEBI" id="CHEBI:15378"/>
        <dbReference type="ChEBI" id="CHEBI:15379"/>
        <dbReference type="ChEBI" id="CHEBI:57783"/>
        <dbReference type="ChEBI" id="CHEBI:57959"/>
        <dbReference type="ChEBI" id="CHEBI:58125"/>
        <dbReference type="ChEBI" id="CHEBI:58349"/>
        <dbReference type="EC" id="1.14.13.9"/>
    </reaction>
</comment>
<comment type="cofactor">
    <cofactor evidence="1">
        <name>FAD</name>
        <dbReference type="ChEBI" id="CHEBI:57692"/>
    </cofactor>
</comment>
<comment type="pathway">
    <text evidence="1">Cofactor biosynthesis; NAD(+) biosynthesis; quinolinate from L-kynurenine: step 1/3.</text>
</comment>
<comment type="similarity">
    <text evidence="1">Belongs to the aromatic-ring hydroxylase family. KMO subfamily.</text>
</comment>
<proteinExistence type="inferred from homology"/>
<keyword id="KW-0274">FAD</keyword>
<keyword id="KW-0285">Flavoprotein</keyword>
<keyword id="KW-0503">Monooxygenase</keyword>
<keyword id="KW-0521">NADP</keyword>
<keyword id="KW-0560">Oxidoreductase</keyword>
<keyword id="KW-0662">Pyridine nucleotide biosynthesis</keyword>
<accession>Q2P316</accession>
<organism>
    <name type="scientific">Xanthomonas oryzae pv. oryzae (strain MAFF 311018)</name>
    <dbReference type="NCBI Taxonomy" id="342109"/>
    <lineage>
        <taxon>Bacteria</taxon>
        <taxon>Pseudomonadati</taxon>
        <taxon>Pseudomonadota</taxon>
        <taxon>Gammaproteobacteria</taxon>
        <taxon>Lysobacterales</taxon>
        <taxon>Lysobacteraceae</taxon>
        <taxon>Xanthomonas</taxon>
    </lineage>
</organism>
<sequence length="455" mass="50983">MSPVSPRSLTLIGAGLAGCLLAILLSRRGWQITVYERRGDPRIKGYECGRSINLALAERGRHALRQAGAEELVMAKAVMMRGRMVHPLVGEPQLQRYGRDDSEVIWSIHRAALNVALLDLAEQAGARVHFYRRLHTVDFDAGYARFIDDRDDQPHEIHFQSLIGSDGAGSALRAAMQRKSPLGERTEFLDHSYKELEIPPLPGGGFRIEGNALHIWPRGRYMFIALPNDGGTFTVTLFLPNAGEPSFATTRNGDEAFALFARDFPDALPLIPQLKQHWEEHPPGLLGTLTLDRWHLDGRALLIGDAAHAMVPFHGQGMNCAFEDCVALADQLDAHDDLASAFAAFEAARRDDAGAIQQMALENYLEMRDRVDDPEFLLQRQLEQQLQARWPTRFVPHYTMVTFLRTRYSIALARSEIQREILVEATRGHSDLSRLDWAALETIVHARLEPLDGAH</sequence>
<feature type="chain" id="PRO_0000361951" description="Kynurenine 3-monooxygenase">
    <location>
        <begin position="1"/>
        <end position="455"/>
    </location>
</feature>